<sequence>MSSPALDTIHDQTGEQDLHQEVQAQEHLPVEPTPEVQEEPESDHQDDDEQPEAQVLEQEQEQVAEQERLQDQEDQDQGAELVSQQPTAEEQEETRDELYNEVFGNQGSEASDLSDDEDVRMDEGEKYVPATATSAAKIPKFKKSKRDDEDEDEDEDEDEDDGGERRRKKKKRAERRRQRQEEEDEDEAPVLDEATQRRLALEERIDAIGKKPKAIRRKKKGDDDVDIVDSYHDDICARLRDRMIAAADKDEAANRIKMPGTAKLAMLDEVMGVLRNTTLWQSIVDNGVLEAVKRWLEPLPDKSLPSVGIQKAIFEVLPKMDLDTTTLKECRLGPIVLFYTKTKRVTPAINRQADALVQAWSRPIIKRPANYRSRYIESQNEVEQSQGGGGTGGGYSQSQRGPGERKFKRFDVKKALEENAHRKGARLQIVQDVQYTVAPEPKTHHHAEEMQHVSRIQQDNKKFNRFARQVKTKKH</sequence>
<accession>P0CO38</accession>
<accession>Q55WI4</accession>
<accession>Q5KJR1</accession>
<comment type="function">
    <text evidence="1">Transcription factor involved in RNA polymerase II transcription regulation. May function in both SPT15/TBP post-recruitment and recruitment steps of transcription (By similarity).</text>
</comment>
<comment type="subcellular location">
    <subcellularLocation>
        <location evidence="2">Nucleus</location>
    </subcellularLocation>
</comment>
<comment type="similarity">
    <text evidence="4">Belongs to the IWS1 family.</text>
</comment>
<keyword id="KW-0539">Nucleus</keyword>
<keyword id="KW-1185">Reference proteome</keyword>
<keyword id="KW-0804">Transcription</keyword>
<keyword id="KW-0805">Transcription regulation</keyword>
<reference key="1">
    <citation type="journal article" date="2005" name="Science">
        <title>The genome of the basidiomycetous yeast and human pathogen Cryptococcus neoformans.</title>
        <authorList>
            <person name="Loftus B.J."/>
            <person name="Fung E."/>
            <person name="Roncaglia P."/>
            <person name="Rowley D."/>
            <person name="Amedeo P."/>
            <person name="Bruno D."/>
            <person name="Vamathevan J."/>
            <person name="Miranda M."/>
            <person name="Anderson I.J."/>
            <person name="Fraser J.A."/>
            <person name="Allen J.E."/>
            <person name="Bosdet I.E."/>
            <person name="Brent M.R."/>
            <person name="Chiu R."/>
            <person name="Doering T.L."/>
            <person name="Donlin M.J."/>
            <person name="D'Souza C.A."/>
            <person name="Fox D.S."/>
            <person name="Grinberg V."/>
            <person name="Fu J."/>
            <person name="Fukushima M."/>
            <person name="Haas B.J."/>
            <person name="Huang J.C."/>
            <person name="Janbon G."/>
            <person name="Jones S.J.M."/>
            <person name="Koo H.L."/>
            <person name="Krzywinski M.I."/>
            <person name="Kwon-Chung K.J."/>
            <person name="Lengeler K.B."/>
            <person name="Maiti R."/>
            <person name="Marra M.A."/>
            <person name="Marra R.E."/>
            <person name="Mathewson C.A."/>
            <person name="Mitchell T.G."/>
            <person name="Pertea M."/>
            <person name="Riggs F.R."/>
            <person name="Salzberg S.L."/>
            <person name="Schein J.E."/>
            <person name="Shvartsbeyn A."/>
            <person name="Shin H."/>
            <person name="Shumway M."/>
            <person name="Specht C.A."/>
            <person name="Suh B.B."/>
            <person name="Tenney A."/>
            <person name="Utterback T.R."/>
            <person name="Wickes B.L."/>
            <person name="Wortman J.R."/>
            <person name="Wye N.H."/>
            <person name="Kronstad J.W."/>
            <person name="Lodge J.K."/>
            <person name="Heitman J."/>
            <person name="Davis R.W."/>
            <person name="Fraser C.M."/>
            <person name="Hyman R.W."/>
        </authorList>
    </citation>
    <scope>NUCLEOTIDE SEQUENCE [LARGE SCALE GENOMIC DNA]</scope>
    <source>
        <strain>JEC21 / ATCC MYA-565</strain>
    </source>
</reference>
<evidence type="ECO:0000250" key="1"/>
<evidence type="ECO:0000255" key="2">
    <source>
        <dbReference type="PROSITE-ProRule" id="PRU00649"/>
    </source>
</evidence>
<evidence type="ECO:0000256" key="3">
    <source>
        <dbReference type="SAM" id="MobiDB-lite"/>
    </source>
</evidence>
<evidence type="ECO:0000305" key="4"/>
<feature type="chain" id="PRO_0000083357" description="Transcription factor IWS1">
    <location>
        <begin position="1"/>
        <end position="475"/>
    </location>
</feature>
<feature type="domain" description="TFIIS N-terminal" evidence="2">
    <location>
        <begin position="290"/>
        <end position="367"/>
    </location>
</feature>
<feature type="region of interest" description="Disordered" evidence="3">
    <location>
        <begin position="1"/>
        <end position="195"/>
    </location>
</feature>
<feature type="region of interest" description="Disordered" evidence="3">
    <location>
        <begin position="379"/>
        <end position="406"/>
    </location>
</feature>
<feature type="compositionally biased region" description="Basic and acidic residues" evidence="3">
    <location>
        <begin position="8"/>
        <end position="20"/>
    </location>
</feature>
<feature type="compositionally biased region" description="Acidic residues" evidence="3">
    <location>
        <begin position="36"/>
        <end position="51"/>
    </location>
</feature>
<feature type="compositionally biased region" description="Acidic residues" evidence="3">
    <location>
        <begin position="148"/>
        <end position="162"/>
    </location>
</feature>
<feature type="compositionally biased region" description="Basic residues" evidence="3">
    <location>
        <begin position="165"/>
        <end position="178"/>
    </location>
</feature>
<feature type="compositionally biased region" description="Acidic residues" evidence="3">
    <location>
        <begin position="181"/>
        <end position="190"/>
    </location>
</feature>
<feature type="compositionally biased region" description="Gly residues" evidence="3">
    <location>
        <begin position="386"/>
        <end position="395"/>
    </location>
</feature>
<gene>
    <name type="primary">IWS1</name>
    <name type="ordered locus">CNC05650</name>
</gene>
<name>IWS1_CRYNJ</name>
<protein>
    <recommendedName>
        <fullName>Transcription factor IWS1</fullName>
    </recommendedName>
</protein>
<dbReference type="EMBL" id="AE017343">
    <property type="protein sequence ID" value="AAW42473.1"/>
    <property type="molecule type" value="Genomic_DNA"/>
</dbReference>
<dbReference type="RefSeq" id="XP_569780.1">
    <property type="nucleotide sequence ID" value="XM_569780.1"/>
</dbReference>
<dbReference type="SMR" id="P0CO38"/>
<dbReference type="STRING" id="214684.P0CO38"/>
<dbReference type="PaxDb" id="214684-P0CO38"/>
<dbReference type="EnsemblFungi" id="AAW42473">
    <property type="protein sequence ID" value="AAW42473"/>
    <property type="gene ID" value="CNC05650"/>
</dbReference>
<dbReference type="GeneID" id="3256341"/>
<dbReference type="KEGG" id="cne:CNC05650"/>
<dbReference type="VEuPathDB" id="FungiDB:CNC05650"/>
<dbReference type="eggNOG" id="KOG1793">
    <property type="taxonomic scope" value="Eukaryota"/>
</dbReference>
<dbReference type="HOGENOM" id="CLU_045275_2_2_1"/>
<dbReference type="InParanoid" id="P0CO38"/>
<dbReference type="OMA" id="REMKEMW"/>
<dbReference type="OrthoDB" id="21124at2759"/>
<dbReference type="Proteomes" id="UP000002149">
    <property type="component" value="Chromosome 3"/>
</dbReference>
<dbReference type="GO" id="GO:0005634">
    <property type="term" value="C:nucleus"/>
    <property type="evidence" value="ECO:0000318"/>
    <property type="project" value="GO_Central"/>
</dbReference>
<dbReference type="GO" id="GO:0016973">
    <property type="term" value="P:poly(A)+ mRNA export from nucleus"/>
    <property type="evidence" value="ECO:0000318"/>
    <property type="project" value="GO_Central"/>
</dbReference>
<dbReference type="FunFam" id="1.20.930.10:FF:000013">
    <property type="entry name" value="Transcription factor IWS1"/>
    <property type="match status" value="1"/>
</dbReference>
<dbReference type="Gene3D" id="1.20.930.10">
    <property type="entry name" value="Conserved domain common to transcription factors TFIIS, elongin A, CRSP70"/>
    <property type="match status" value="1"/>
</dbReference>
<dbReference type="InterPro" id="IPR051037">
    <property type="entry name" value="RNAPII_TF_IWS1"/>
</dbReference>
<dbReference type="InterPro" id="IPR035441">
    <property type="entry name" value="TFIIS/LEDGF_dom_sf"/>
</dbReference>
<dbReference type="InterPro" id="IPR017923">
    <property type="entry name" value="TFIIS_N"/>
</dbReference>
<dbReference type="PANTHER" id="PTHR46010">
    <property type="entry name" value="PROTEIN IWS1 HOMOLOG"/>
    <property type="match status" value="1"/>
</dbReference>
<dbReference type="PANTHER" id="PTHR46010:SF1">
    <property type="entry name" value="PROTEIN IWS1 HOMOLOG"/>
    <property type="match status" value="1"/>
</dbReference>
<dbReference type="Pfam" id="PF08711">
    <property type="entry name" value="Med26"/>
    <property type="match status" value="1"/>
</dbReference>
<dbReference type="PROSITE" id="PS51319">
    <property type="entry name" value="TFIIS_N"/>
    <property type="match status" value="1"/>
</dbReference>
<organism>
    <name type="scientific">Cryptococcus neoformans var. neoformans serotype D (strain JEC21 / ATCC MYA-565)</name>
    <name type="common">Filobasidiella neoformans</name>
    <dbReference type="NCBI Taxonomy" id="214684"/>
    <lineage>
        <taxon>Eukaryota</taxon>
        <taxon>Fungi</taxon>
        <taxon>Dikarya</taxon>
        <taxon>Basidiomycota</taxon>
        <taxon>Agaricomycotina</taxon>
        <taxon>Tremellomycetes</taxon>
        <taxon>Tremellales</taxon>
        <taxon>Cryptococcaceae</taxon>
        <taxon>Cryptococcus</taxon>
        <taxon>Cryptococcus neoformans species complex</taxon>
    </lineage>
</organism>
<proteinExistence type="inferred from homology"/>